<gene>
    <name type="ordered locus">Rv1433</name>
    <name type="ordered locus">RVBD_1433</name>
    <name type="ORF">P425_01489</name>
</gene>
<reference key="1">
    <citation type="journal article" date="1998" name="Nature">
        <title>Deciphering the biology of Mycobacterium tuberculosis from the complete genome sequence.</title>
        <authorList>
            <person name="Cole S.T."/>
            <person name="Brosch R."/>
            <person name="Parkhill J."/>
            <person name="Garnier T."/>
            <person name="Churcher C.M."/>
            <person name="Harris D.E."/>
            <person name="Gordon S.V."/>
            <person name="Eiglmeier K."/>
            <person name="Gas S."/>
            <person name="Barry C.E. III"/>
            <person name="Tekaia F."/>
            <person name="Badcock K."/>
            <person name="Basham D."/>
            <person name="Brown D."/>
            <person name="Chillingworth T."/>
            <person name="Connor R."/>
            <person name="Davies R.M."/>
            <person name="Devlin K."/>
            <person name="Feltwell T."/>
            <person name="Gentles S."/>
            <person name="Hamlin N."/>
            <person name="Holroyd S."/>
            <person name="Hornsby T."/>
            <person name="Jagels K."/>
            <person name="Krogh A."/>
            <person name="McLean J."/>
            <person name="Moule S."/>
            <person name="Murphy L.D."/>
            <person name="Oliver S."/>
            <person name="Osborne J."/>
            <person name="Quail M.A."/>
            <person name="Rajandream M.A."/>
            <person name="Rogers J."/>
            <person name="Rutter S."/>
            <person name="Seeger K."/>
            <person name="Skelton S."/>
            <person name="Squares S."/>
            <person name="Squares R."/>
            <person name="Sulston J.E."/>
            <person name="Taylor K."/>
            <person name="Whitehead S."/>
            <person name="Barrell B.G."/>
        </authorList>
    </citation>
    <scope>NUCLEOTIDE SEQUENCE [LARGE SCALE GENOMIC DNA]</scope>
    <source>
        <strain>ATCC 25618 / H37Rv</strain>
    </source>
</reference>
<reference key="2">
    <citation type="submission" date="2013-11" db="EMBL/GenBank/DDBJ databases">
        <title>The genome sequence of Mycobacterium tuberculosis H37Rv.</title>
        <authorList>
            <consortium name="The Broad Institute Genome Sequencing Platform"/>
            <person name="Galagan J."/>
            <person name="Kreiswirth B."/>
            <person name="Dobos K."/>
            <person name="Fortune S."/>
            <person name="Fitzgerald M."/>
            <person name="Young S.K."/>
            <person name="Zeng Q."/>
            <person name="Gargeya S."/>
            <person name="Abouelleil A."/>
            <person name="Alvarado L."/>
            <person name="Berlin A.M."/>
            <person name="Chapman S.B."/>
            <person name="Gainer-Dewar J."/>
            <person name="Goldberg J."/>
            <person name="Gnerre S."/>
            <person name="Griggs A."/>
            <person name="Gujja S."/>
            <person name="Hansen M."/>
            <person name="Howarth C."/>
            <person name="Imamovic A."/>
            <person name="Larimer J."/>
            <person name="McCowan C."/>
            <person name="Murphy C."/>
            <person name="Pearson M."/>
            <person name="Poon T."/>
            <person name="Priest M."/>
            <person name="Roberts A."/>
            <person name="Saif S."/>
            <person name="Shea T."/>
            <person name="Sykes S."/>
            <person name="Wortman J."/>
            <person name="Nusbaum C."/>
            <person name="Birren B."/>
        </authorList>
    </citation>
    <scope>NUCLEOTIDE SEQUENCE [LARGE SCALE GENOMIC DNA]</scope>
    <source>
        <strain>ATCC 25618 / H37Rv</strain>
    </source>
</reference>
<reference key="3">
    <citation type="submission" date="2014-04" db="EMBL/GenBank/DDBJ databases">
        <title>The genome sequence of Mycobacterium tuberculosis H37Rv.</title>
        <authorList>
            <consortium name="The Broad Institute Genomics Platform"/>
            <consortium name="The Broad Institute Genome Sequencing Center for Infectious Disease"/>
            <person name="Earl A.M."/>
            <person name="Kreiswirth B."/>
            <person name="Gomez J."/>
            <person name="Victor T."/>
            <person name="Desjardins C."/>
            <person name="Abeel T."/>
            <person name="Young S."/>
            <person name="Zeng Q."/>
            <person name="Gargeya S."/>
            <person name="Abouelleil A."/>
            <person name="Alvarado L."/>
            <person name="Chapman S.B."/>
            <person name="Gainer-Dewar J."/>
            <person name="Goldberg J."/>
            <person name="Griggs A."/>
            <person name="Gujja S."/>
            <person name="Hansen M."/>
            <person name="Howarth C."/>
            <person name="Imamovic A."/>
            <person name="Larimer J."/>
            <person name="Murphy C."/>
            <person name="Naylor J."/>
            <person name="Pearson M."/>
            <person name="Poon T.W."/>
            <person name="Priest M."/>
            <person name="Roberts A."/>
            <person name="Saif S."/>
            <person name="Shea T."/>
            <person name="Sykes S."/>
            <person name="Wortman J."/>
            <person name="Nusbaum C."/>
            <person name="Birren B."/>
        </authorList>
    </citation>
    <scope>NUCLEOTIDE SEQUENCE [LARGE SCALE GENOMIC DNA]</scope>
    <source>
        <strain>ATCC 25618 / H37Rv</strain>
    </source>
</reference>
<reference key="4">
    <citation type="journal article" date="2013" name="Antimicrob. Agents Chemother.">
        <title>In vitro cross-linking of Mycobacterium tuberculosis peptidoglycan by L,D-transpeptidases and inactivation of these enzymes by carbapenems.</title>
        <authorList>
            <person name="Cordillot M."/>
            <person name="Dubee V."/>
            <person name="Triboulet S."/>
            <person name="Dubost L."/>
            <person name="Marie A."/>
            <person name="Hugonnet J.E."/>
            <person name="Arthur M."/>
            <person name="Mainardi J.L."/>
        </authorList>
    </citation>
    <scope>FUNCTION</scope>
    <scope>ACTIVITY REGULATION</scope>
    <source>
        <strain>ATCC 25618 / H37Rv</strain>
    </source>
</reference>
<reference evidence="5" key="5">
    <citation type="submission" date="2013-06" db="PDB data bank">
        <title>X-ray crystal structure of an l,d-transpeptidase from Mycobacterium tuberculosis H37Rv (casp target).</title>
        <authorList>
            <consortium name="Midwest center for structural genomics (MCSG)"/>
        </authorList>
    </citation>
    <scope>X-RAY CRYSTALLOGRAPHY (1.65 ANGSTROMS) OF 20-271</scope>
    <source>
        <strain>ATCC 25618 / H37Rv</strain>
    </source>
</reference>
<reference evidence="6 7" key="6">
    <citation type="journal article" date="2019" name="ACS Infect. Dis.">
        <title>Structural Basis for the Interaction and Processing of beta-Lactam Antibiotics by l,d-Transpeptidase 3 (LdtMt3) from Mycobacterium tuberculosis.</title>
        <authorList>
            <person name="Libreros-Zuniga G.A."/>
            <person name="Dos Santos Silva C."/>
            <person name="Salgado Ferreira R."/>
            <person name="Dias M.V.B."/>
        </authorList>
    </citation>
    <scope>X-RAY CRYSTALLOGRAPHY (1.32 ANGSTROMS) OF 32-271 IN COMPLEX WITH FAROPENEM</scope>
    <scope>ACTIVITY REGULATION</scope>
</reference>
<comment type="function">
    <text evidence="2">Probable L,D-transpeptidase that may perform as-yet-unknown cross-linking reactions in M.tuberculosis. Is not able to generate 3-&gt;3 cross-links in peptidoglycan, using tetrapeptide stems as acyl donor substrates. May function in the anchoring of proteins to peptidoglycan.</text>
</comment>
<comment type="activity regulation">
    <text evidence="2 3">Is irreversibly inactivated by the beta-lactam carbapenems via the formation of a covalent adduct resulting from acylation of the catalytic Cys (PubMed:24041897, PubMed:30556998). Imipenem is the most efficient drug for in vitro LdtMt3/Rv1433 inactivation (PubMed:24041897).</text>
</comment>
<comment type="pathway">
    <text>Cell wall biogenesis; peptidoglycan biosynthesis.</text>
</comment>
<feature type="chain" id="PRO_0000430335" description="Probable L,D-transpeptidase 3">
    <location>
        <begin position="1"/>
        <end position="271"/>
    </location>
</feature>
<feature type="domain" description="L,D-TPase catalytic" evidence="1">
    <location>
        <begin position="127"/>
        <end position="270"/>
    </location>
</feature>
<feature type="active site" description="Proton donor/acceptor" evidence="1">
    <location>
        <position position="228"/>
    </location>
</feature>
<feature type="active site" description="Nucleophile" evidence="1">
    <location>
        <position position="246"/>
    </location>
</feature>
<feature type="site" description="Covalently binds to acetyl group of faropenem" evidence="3 7">
    <location>
        <position position="246"/>
    </location>
</feature>
<feature type="strand" evidence="8">
    <location>
        <begin position="38"/>
        <end position="43"/>
    </location>
</feature>
<feature type="strand" evidence="8">
    <location>
        <begin position="55"/>
        <end position="61"/>
    </location>
</feature>
<feature type="helix" evidence="8">
    <location>
        <begin position="66"/>
        <end position="68"/>
    </location>
</feature>
<feature type="helix" evidence="8">
    <location>
        <begin position="69"/>
        <end position="75"/>
    </location>
</feature>
<feature type="strand" evidence="8">
    <location>
        <begin position="78"/>
        <end position="82"/>
    </location>
</feature>
<feature type="strand" evidence="8">
    <location>
        <begin position="86"/>
        <end position="92"/>
    </location>
</feature>
<feature type="strand" evidence="8">
    <location>
        <begin position="95"/>
        <end position="102"/>
    </location>
</feature>
<feature type="strand" evidence="8">
    <location>
        <begin position="109"/>
        <end position="114"/>
    </location>
</feature>
<feature type="strand" evidence="8">
    <location>
        <begin position="117"/>
        <end position="123"/>
    </location>
</feature>
<feature type="strand" evidence="8">
    <location>
        <begin position="127"/>
        <end position="132"/>
    </location>
</feature>
<feature type="turn" evidence="8">
    <location>
        <begin position="133"/>
        <end position="136"/>
    </location>
</feature>
<feature type="strand" evidence="8">
    <location>
        <begin position="137"/>
        <end position="142"/>
    </location>
</feature>
<feature type="strand" evidence="8">
    <location>
        <begin position="155"/>
        <end position="157"/>
    </location>
</feature>
<feature type="strand" evidence="8">
    <location>
        <begin position="167"/>
        <end position="169"/>
    </location>
</feature>
<feature type="strand" evidence="8">
    <location>
        <begin position="182"/>
        <end position="185"/>
    </location>
</feature>
<feature type="strand" evidence="8">
    <location>
        <begin position="188"/>
        <end position="196"/>
    </location>
</feature>
<feature type="helix" evidence="8">
    <location>
        <begin position="197"/>
        <end position="200"/>
    </location>
</feature>
<feature type="strand" evidence="8">
    <location>
        <begin position="211"/>
        <end position="219"/>
    </location>
</feature>
<feature type="strand" evidence="8">
    <location>
        <begin position="226"/>
        <end position="229"/>
    </location>
</feature>
<feature type="helix" evidence="8">
    <location>
        <begin position="231"/>
        <end position="236"/>
    </location>
</feature>
<feature type="turn" evidence="8">
    <location>
        <begin position="237"/>
        <end position="239"/>
    </location>
</feature>
<feature type="strand" evidence="8">
    <location>
        <begin position="243"/>
        <end position="249"/>
    </location>
</feature>
<feature type="helix" evidence="8">
    <location>
        <begin position="251"/>
        <end position="260"/>
    </location>
</feature>
<feature type="strand" evidence="8">
    <location>
        <begin position="266"/>
        <end position="270"/>
    </location>
</feature>
<sequence length="271" mass="28701">MRAVFGCAIAVVGIAGSVVAGPADIHLVAAKQSYGFAVASVLPTRGQVVGVAHPVVVTFSAPITNPANRHAAERAVEVKSTPAMTGKFEWLDNDVVQWVPDRFWPAHSTVELSVGSLSSDFKTGPAVVGVASISQHTFTVSIDGVEEGPPPPLPAPHHRVHFGEDGVMPASMGRPEYPTPVGSYTVLSKERSVIMDSSSVGIPVDDPDGYRLSVDYAVRITSRGLYVHSAPWALPALGLENVSHGCISLSREDAEWYYNAVDIGDPVIVQE</sequence>
<protein>
    <recommendedName>
        <fullName evidence="4">Probable L,D-transpeptidase 3</fullName>
        <shortName>LDT 3</shortName>
        <ecNumber>2.3.2.-</ecNumber>
    </recommendedName>
    <alternativeName>
        <fullName>Ldt(Mt3)</fullName>
    </alternativeName>
</protein>
<proteinExistence type="evidence at protein level"/>
<organism>
    <name type="scientific">Mycobacterium tuberculosis (strain ATCC 25618 / H37Rv)</name>
    <dbReference type="NCBI Taxonomy" id="83332"/>
    <lineage>
        <taxon>Bacteria</taxon>
        <taxon>Bacillati</taxon>
        <taxon>Actinomycetota</taxon>
        <taxon>Actinomycetes</taxon>
        <taxon>Mycobacteriales</taxon>
        <taxon>Mycobacteriaceae</taxon>
        <taxon>Mycobacterium</taxon>
        <taxon>Mycobacterium tuberculosis complex</taxon>
    </lineage>
</organism>
<dbReference type="EC" id="2.3.2.-"/>
<dbReference type="EMBL" id="CP003248">
    <property type="protein sequence ID" value="AFN49342.1"/>
    <property type="molecule type" value="Genomic_DNA"/>
</dbReference>
<dbReference type="EMBL" id="AL123456">
    <property type="protein sequence ID" value="CCP44192.1"/>
    <property type="molecule type" value="Genomic_DNA"/>
</dbReference>
<dbReference type="EMBL" id="JLDD01000016">
    <property type="protein sequence ID" value="KBJ35648.1"/>
    <property type="molecule type" value="Genomic_DNA"/>
</dbReference>
<dbReference type="RefSeq" id="NP_215949.1">
    <property type="nucleotide sequence ID" value="NC_000962.3"/>
</dbReference>
<dbReference type="PDB" id="4K73">
    <property type="method" value="X-ray"/>
    <property type="resolution" value="1.65 A"/>
    <property type="chains" value="A=20-271"/>
</dbReference>
<dbReference type="PDB" id="6D4K">
    <property type="method" value="X-ray"/>
    <property type="resolution" value="1.32 A"/>
    <property type="chains" value="A=32-271"/>
</dbReference>
<dbReference type="PDB" id="6D51">
    <property type="method" value="X-ray"/>
    <property type="resolution" value="1.83 A"/>
    <property type="chains" value="A=33-271"/>
</dbReference>
<dbReference type="PDBsum" id="4K73"/>
<dbReference type="PDBsum" id="6D4K"/>
<dbReference type="PDBsum" id="6D51"/>
<dbReference type="SMR" id="O06825"/>
<dbReference type="STRING" id="83332.Rv1433"/>
<dbReference type="PaxDb" id="83332-Rv1433"/>
<dbReference type="DNASU" id="886649"/>
<dbReference type="GeneID" id="886649"/>
<dbReference type="KEGG" id="mtu:Rv1433"/>
<dbReference type="KEGG" id="mtv:RVBD_1433"/>
<dbReference type="TubercuList" id="Rv1433"/>
<dbReference type="eggNOG" id="COG1376">
    <property type="taxonomic scope" value="Bacteria"/>
</dbReference>
<dbReference type="InParanoid" id="O06825"/>
<dbReference type="OrthoDB" id="5242354at2"/>
<dbReference type="PhylomeDB" id="O06825"/>
<dbReference type="BRENDA" id="2.3.2.B14">
    <property type="organism ID" value="3445"/>
</dbReference>
<dbReference type="UniPathway" id="UPA00219"/>
<dbReference type="EvolutionaryTrace" id="O06825"/>
<dbReference type="Proteomes" id="UP000001584">
    <property type="component" value="Chromosome"/>
</dbReference>
<dbReference type="GO" id="GO:0016746">
    <property type="term" value="F:acyltransferase activity"/>
    <property type="evidence" value="ECO:0007669"/>
    <property type="project" value="UniProtKB-KW"/>
</dbReference>
<dbReference type="GO" id="GO:0071972">
    <property type="term" value="F:peptidoglycan L,D-transpeptidase activity"/>
    <property type="evidence" value="ECO:0000318"/>
    <property type="project" value="GO_Central"/>
</dbReference>
<dbReference type="GO" id="GO:0071555">
    <property type="term" value="P:cell wall organization"/>
    <property type="evidence" value="ECO:0007669"/>
    <property type="project" value="UniProtKB-KW"/>
</dbReference>
<dbReference type="GO" id="GO:0018104">
    <property type="term" value="P:peptidoglycan-protein cross-linking"/>
    <property type="evidence" value="ECO:0000318"/>
    <property type="project" value="GO_Central"/>
</dbReference>
<dbReference type="GO" id="GO:0008360">
    <property type="term" value="P:regulation of cell shape"/>
    <property type="evidence" value="ECO:0007669"/>
    <property type="project" value="UniProtKB-KW"/>
</dbReference>
<dbReference type="CDD" id="cd16913">
    <property type="entry name" value="YkuD_like"/>
    <property type="match status" value="1"/>
</dbReference>
<dbReference type="FunFam" id="2.40.440.10:FF:000008">
    <property type="entry name" value="L,D-transpeptidase 1"/>
    <property type="match status" value="1"/>
</dbReference>
<dbReference type="Gene3D" id="2.60.40.3710">
    <property type="match status" value="1"/>
</dbReference>
<dbReference type="Gene3D" id="2.40.440.10">
    <property type="entry name" value="L,D-transpeptidase catalytic domain-like"/>
    <property type="match status" value="1"/>
</dbReference>
<dbReference type="InterPro" id="IPR041280">
    <property type="entry name" value="Big_10"/>
</dbReference>
<dbReference type="InterPro" id="IPR050979">
    <property type="entry name" value="LD-transpeptidase"/>
</dbReference>
<dbReference type="InterPro" id="IPR005490">
    <property type="entry name" value="LD_TPept_cat_dom"/>
</dbReference>
<dbReference type="InterPro" id="IPR038063">
    <property type="entry name" value="Transpep_catalytic_dom"/>
</dbReference>
<dbReference type="PANTHER" id="PTHR30582">
    <property type="entry name" value="L,D-TRANSPEPTIDASE"/>
    <property type="match status" value="1"/>
</dbReference>
<dbReference type="PANTHER" id="PTHR30582:SF2">
    <property type="entry name" value="L,D-TRANSPEPTIDASE YCIB-RELATED"/>
    <property type="match status" value="1"/>
</dbReference>
<dbReference type="Pfam" id="PF17964">
    <property type="entry name" value="Big_10"/>
    <property type="match status" value="1"/>
</dbReference>
<dbReference type="Pfam" id="PF03734">
    <property type="entry name" value="YkuD"/>
    <property type="match status" value="1"/>
</dbReference>
<dbReference type="SUPFAM" id="SSF141523">
    <property type="entry name" value="L,D-transpeptidase catalytic domain-like"/>
    <property type="match status" value="1"/>
</dbReference>
<dbReference type="PROSITE" id="PS52029">
    <property type="entry name" value="LD_TPASE"/>
    <property type="match status" value="1"/>
</dbReference>
<keyword id="KW-0002">3D-structure</keyword>
<keyword id="KW-0012">Acyltransferase</keyword>
<keyword id="KW-0133">Cell shape</keyword>
<keyword id="KW-0961">Cell wall biogenesis/degradation</keyword>
<keyword id="KW-0573">Peptidoglycan synthesis</keyword>
<keyword id="KW-1185">Reference proteome</keyword>
<keyword id="KW-0808">Transferase</keyword>
<name>LDT3_MYCTU</name>
<accession>O06825</accession>
<accession>F2GEW6</accession>
<accession>I6Y6I9</accession>
<accession>Q7D8G2</accession>
<evidence type="ECO:0000255" key="1">
    <source>
        <dbReference type="PROSITE-ProRule" id="PRU01373"/>
    </source>
</evidence>
<evidence type="ECO:0000269" key="2">
    <source>
    </source>
</evidence>
<evidence type="ECO:0000269" key="3">
    <source>
    </source>
</evidence>
<evidence type="ECO:0000305" key="4"/>
<evidence type="ECO:0007744" key="5">
    <source>
        <dbReference type="PDB" id="4K73"/>
    </source>
</evidence>
<evidence type="ECO:0007744" key="6">
    <source>
        <dbReference type="PDB" id="6D4K"/>
    </source>
</evidence>
<evidence type="ECO:0007744" key="7">
    <source>
        <dbReference type="PDB" id="6D51"/>
    </source>
</evidence>
<evidence type="ECO:0007829" key="8">
    <source>
        <dbReference type="PDB" id="6D4K"/>
    </source>
</evidence>